<accession>Q9KM23</accession>
<gene>
    <name evidence="6" type="primary">vxrB</name>
    <name evidence="8" type="ordered locus">VC_A0566</name>
</gene>
<organism>
    <name type="scientific">Vibrio cholerae serotype O1 (strain ATCC 39315 / El Tor Inaba N16961)</name>
    <dbReference type="NCBI Taxonomy" id="243277"/>
    <lineage>
        <taxon>Bacteria</taxon>
        <taxon>Pseudomonadati</taxon>
        <taxon>Pseudomonadota</taxon>
        <taxon>Gammaproteobacteria</taxon>
        <taxon>Vibrionales</taxon>
        <taxon>Vibrionaceae</taxon>
        <taxon>Vibrio</taxon>
    </lineage>
</organism>
<dbReference type="EMBL" id="AE003853">
    <property type="protein sequence ID" value="AAF96468.1"/>
    <property type="molecule type" value="Genomic_DNA"/>
</dbReference>
<dbReference type="PIR" id="G82444">
    <property type="entry name" value="G82444"/>
</dbReference>
<dbReference type="RefSeq" id="NP_232956.1">
    <property type="nucleotide sequence ID" value="NC_002506.1"/>
</dbReference>
<dbReference type="SMR" id="Q9KM23"/>
<dbReference type="STRING" id="243277.VC_A0566"/>
<dbReference type="DNASU" id="2612821"/>
<dbReference type="EnsemblBacteria" id="AAF96468">
    <property type="protein sequence ID" value="AAF96468"/>
    <property type="gene ID" value="VC_A0566"/>
</dbReference>
<dbReference type="KEGG" id="vch:VC_A0566"/>
<dbReference type="PATRIC" id="fig|243277.26.peg.3193"/>
<dbReference type="eggNOG" id="COG0745">
    <property type="taxonomic scope" value="Bacteria"/>
</dbReference>
<dbReference type="HOGENOM" id="CLU_000445_30_1_6"/>
<dbReference type="Proteomes" id="UP000000584">
    <property type="component" value="Chromosome 2"/>
</dbReference>
<dbReference type="GO" id="GO:0005829">
    <property type="term" value="C:cytosol"/>
    <property type="evidence" value="ECO:0000318"/>
    <property type="project" value="GO_Central"/>
</dbReference>
<dbReference type="GO" id="GO:0032993">
    <property type="term" value="C:protein-DNA complex"/>
    <property type="evidence" value="ECO:0000318"/>
    <property type="project" value="GO_Central"/>
</dbReference>
<dbReference type="GO" id="GO:0000156">
    <property type="term" value="F:phosphorelay response regulator activity"/>
    <property type="evidence" value="ECO:0000318"/>
    <property type="project" value="GO_Central"/>
</dbReference>
<dbReference type="GO" id="GO:0000976">
    <property type="term" value="F:transcription cis-regulatory region binding"/>
    <property type="evidence" value="ECO:0000318"/>
    <property type="project" value="GO_Central"/>
</dbReference>
<dbReference type="GO" id="GO:0006355">
    <property type="term" value="P:regulation of DNA-templated transcription"/>
    <property type="evidence" value="ECO:0000318"/>
    <property type="project" value="GO_Central"/>
</dbReference>
<dbReference type="CDD" id="cd00383">
    <property type="entry name" value="trans_reg_C"/>
    <property type="match status" value="1"/>
</dbReference>
<dbReference type="FunFam" id="1.10.10.10:FF:000216">
    <property type="entry name" value="DNA-binding response regulator"/>
    <property type="match status" value="1"/>
</dbReference>
<dbReference type="FunFam" id="3.40.50.2300:FF:000296">
    <property type="entry name" value="Transcriptional regulator"/>
    <property type="match status" value="1"/>
</dbReference>
<dbReference type="Gene3D" id="3.40.50.2300">
    <property type="match status" value="1"/>
</dbReference>
<dbReference type="Gene3D" id="6.10.250.690">
    <property type="match status" value="1"/>
</dbReference>
<dbReference type="Gene3D" id="1.10.10.10">
    <property type="entry name" value="Winged helix-like DNA-binding domain superfamily/Winged helix DNA-binding domain"/>
    <property type="match status" value="1"/>
</dbReference>
<dbReference type="InterPro" id="IPR011006">
    <property type="entry name" value="CheY-like_superfamily"/>
</dbReference>
<dbReference type="InterPro" id="IPR001867">
    <property type="entry name" value="OmpR/PhoB-type_DNA-bd"/>
</dbReference>
<dbReference type="InterPro" id="IPR016032">
    <property type="entry name" value="Sig_transdc_resp-reg_C-effctor"/>
</dbReference>
<dbReference type="InterPro" id="IPR001789">
    <property type="entry name" value="Sig_transdc_resp-reg_receiver"/>
</dbReference>
<dbReference type="InterPro" id="IPR039420">
    <property type="entry name" value="WalR-like"/>
</dbReference>
<dbReference type="InterPro" id="IPR036388">
    <property type="entry name" value="WH-like_DNA-bd_sf"/>
</dbReference>
<dbReference type="PANTHER" id="PTHR48111:SF21">
    <property type="entry name" value="DNA-BINDING DUAL MASTER TRANSCRIPTIONAL REGULATOR RPAA"/>
    <property type="match status" value="1"/>
</dbReference>
<dbReference type="PANTHER" id="PTHR48111">
    <property type="entry name" value="REGULATOR OF RPOS"/>
    <property type="match status" value="1"/>
</dbReference>
<dbReference type="Pfam" id="PF00072">
    <property type="entry name" value="Response_reg"/>
    <property type="match status" value="1"/>
</dbReference>
<dbReference type="Pfam" id="PF00486">
    <property type="entry name" value="Trans_reg_C"/>
    <property type="match status" value="1"/>
</dbReference>
<dbReference type="SMART" id="SM00448">
    <property type="entry name" value="REC"/>
    <property type="match status" value="1"/>
</dbReference>
<dbReference type="SMART" id="SM00862">
    <property type="entry name" value="Trans_reg_C"/>
    <property type="match status" value="1"/>
</dbReference>
<dbReference type="SUPFAM" id="SSF46894">
    <property type="entry name" value="C-terminal effector domain of the bipartite response regulators"/>
    <property type="match status" value="1"/>
</dbReference>
<dbReference type="SUPFAM" id="SSF52172">
    <property type="entry name" value="CheY-like"/>
    <property type="match status" value="1"/>
</dbReference>
<dbReference type="PROSITE" id="PS51755">
    <property type="entry name" value="OMPR_PHOB"/>
    <property type="match status" value="1"/>
</dbReference>
<dbReference type="PROSITE" id="PS50110">
    <property type="entry name" value="RESPONSE_REGULATORY"/>
    <property type="match status" value="1"/>
</dbReference>
<evidence type="ECO:0000255" key="1">
    <source>
        <dbReference type="PROSITE-ProRule" id="PRU00169"/>
    </source>
</evidence>
<evidence type="ECO:0000255" key="2">
    <source>
        <dbReference type="PROSITE-ProRule" id="PRU01091"/>
    </source>
</evidence>
<evidence type="ECO:0000269" key="3">
    <source>
    </source>
</evidence>
<evidence type="ECO:0000269" key="4">
    <source>
    </source>
</evidence>
<evidence type="ECO:0000269" key="5">
    <source>
    </source>
</evidence>
<evidence type="ECO:0000303" key="6">
    <source>
    </source>
</evidence>
<evidence type="ECO:0000305" key="7"/>
<evidence type="ECO:0000312" key="8">
    <source>
        <dbReference type="EMBL" id="AAF96468.1"/>
    </source>
</evidence>
<reference key="1">
    <citation type="journal article" date="2000" name="Nature">
        <title>DNA sequence of both chromosomes of the cholera pathogen Vibrio cholerae.</title>
        <authorList>
            <person name="Heidelberg J.F."/>
            <person name="Eisen J.A."/>
            <person name="Nelson W.C."/>
            <person name="Clayton R.A."/>
            <person name="Gwinn M.L."/>
            <person name="Dodson R.J."/>
            <person name="Haft D.H."/>
            <person name="Hickey E.K."/>
            <person name="Peterson J.D."/>
            <person name="Umayam L.A."/>
            <person name="Gill S.R."/>
            <person name="Nelson K.E."/>
            <person name="Read T.D."/>
            <person name="Tettelin H."/>
            <person name="Richardson D.L."/>
            <person name="Ermolaeva M.D."/>
            <person name="Vamathevan J.J."/>
            <person name="Bass S."/>
            <person name="Qin H."/>
            <person name="Dragoi I."/>
            <person name="Sellers P."/>
            <person name="McDonald L.A."/>
            <person name="Utterback T.R."/>
            <person name="Fleischmann R.D."/>
            <person name="Nierman W.C."/>
            <person name="White O."/>
            <person name="Salzberg S.L."/>
            <person name="Smith H.O."/>
            <person name="Colwell R.R."/>
            <person name="Mekalanos J.J."/>
            <person name="Venter J.C."/>
            <person name="Fraser C.M."/>
        </authorList>
    </citation>
    <scope>NUCLEOTIDE SEQUENCE [LARGE SCALE GENOMIC DNA]</scope>
    <source>
        <strain>ATCC 39315 / El Tor Inaba N16961</strain>
    </source>
</reference>
<reference key="2">
    <citation type="journal article" date="2015" name="PLoS Pathog.">
        <title>Vibrio cholerae Response Regulator VxrB Controls Colonization and Regulates the Type VI Secretion System.</title>
        <authorList>
            <person name="Cheng A.T."/>
            <person name="Ottemann K.M."/>
            <person name="Yildiz F.H."/>
        </authorList>
    </citation>
    <scope>FUNCTION IN REGULATION OF T6SS AND VIRULENCE</scope>
    <scope>DISRUPTION PHENOTYPE</scope>
    <scope>MUTAGENESIS OF ASP-78</scope>
    <source>
        <strain>El Tor A1552 / Serotype O1</strain>
    </source>
</reference>
<reference key="3">
    <citation type="journal article" date="2017" name="J. Bacteriol.">
        <title>The Two-Component Signal Transduction System VxrAB Positively Regulates Vibrio cholerae Biofilm Formation.</title>
        <authorList>
            <person name="Teschler J.K."/>
            <person name="Cheng A.T."/>
            <person name="Yildiz F.H."/>
        </authorList>
    </citation>
    <scope>FUNCTION IN REGULATION OF BIOFILM FORMATION</scope>
    <scope>DISRUPTION PHENOTYPE</scope>
    <source>
        <strain>El Tor A1552 / Serotype O1</strain>
    </source>
</reference>
<reference key="4">
    <citation type="journal article" date="2022" name="MBio">
        <title>VxrB Influences Antagonism within Biofilms by Controlling Competition through Extracellular Matrix Production and Type 6 Secretion.</title>
        <authorList>
            <person name="Teschler J.K."/>
            <person name="Jimenez-Siebert E."/>
            <person name="Jeckel H."/>
            <person name="Singh P.K."/>
            <person name="Park J.H."/>
            <person name="Pukatzki S."/>
            <person name="Nadell C.D."/>
            <person name="Drescher K."/>
            <person name="Yildiz F.H."/>
        </authorList>
    </citation>
    <scope>FUNCTION</scope>
    <source>
        <strain>El Tor A1552 / Serotype O1</strain>
    </source>
</reference>
<feature type="chain" id="PRO_0000458022" description="Transcriptional regulatory protein VxrB">
    <location>
        <begin position="1"/>
        <end position="245"/>
    </location>
</feature>
<feature type="domain" description="Response regulatory" evidence="1">
    <location>
        <begin position="31"/>
        <end position="142"/>
    </location>
</feature>
<feature type="DNA-binding region" description="OmpR/PhoB-type" evidence="2">
    <location>
        <begin position="151"/>
        <end position="245"/>
    </location>
</feature>
<feature type="modified residue" description="4-aspartylphosphate" evidence="1">
    <location>
        <position position="78"/>
    </location>
</feature>
<feature type="mutagenesis site" description="Partially inactive. Shows a modest defect in colonization." evidence="3">
    <original>D</original>
    <variation>A</variation>
    <location>
        <position position="78"/>
    </location>
</feature>
<feature type="mutagenesis site" description="Constitutively active. Does not significantly impair colonization." evidence="3">
    <original>D</original>
    <variation>E</variation>
    <location>
        <position position="78"/>
    </location>
</feature>
<comment type="function">
    <text evidence="3 4 5">Member of the two-component regulatory system VxrB/VxrA involved in the regulation of diverses processes, including virulence, the type VI secretion system (T6SS) and biofilm formation (PubMed:26000450, PubMed:28607158). VxrB positively regulates the expression of the T6SS, a virulence nanomachine that directly translocates effectors into bacterial or host cells, thereby facilitating colonization by competing with sister cells and intestinal microbiota (PubMed:26000450). In addition, it activates vpsL expression and biofilm formation, and represses motility (PubMed:28607158). May regulate biofilm formation via its regulation of key biofilm regulators and cyclic di-GMP levels (PubMed:28607158). Significantly contributes to both attack and defense via T6SS, while also influencing competition via regulation of biofilm matrix production (PubMed:35880882). Is critical for colonization in the infant mouse model (PubMed:26000450).</text>
</comment>
<comment type="subcellular location">
    <subcellularLocation>
        <location evidence="7">Cytoplasm</location>
    </subcellularLocation>
</comment>
<comment type="PTM">
    <text evidence="7">Phosphorylated by VxrA.</text>
</comment>
<comment type="disruption phenotype">
    <text evidence="3 4">Mutants lacking this gene display a significant colonization defect in an infant mouse intestine colonization assay and mediate less E.coli killing (PubMed:26000450). Mutants show a decrease in vpsL expression and altered levels of cyclic di-GMP, and are deficient in biofilm formation (PubMed:28607158). Mutant does not show any in vitro growth defect (PubMed:26000450).</text>
</comment>
<name>VXRB_VIBCH</name>
<sequence length="245" mass="28060">MSNQWWDEWAEKCHSKAHRQLLFWRYLVKQTLLLVEDDKNLADGLLVSLEQAGYDCLHAETIADVKQHWDKADLVILDRQLPDGDSVQHLMDWKKIKDIPVILLTALVTVKDKVTGLDAGANDYLTKPFAEAELFARIRAQLRSPDSGQDDSKVVTSNLTIDKATREVFFNGESITLTRTEFDLLLFLASNLGRVFTRDELLDHVWGYNHFPTTRTVDTHVLQLRQKLPGLEIETLRGVGYKMKA</sequence>
<proteinExistence type="evidence at protein level"/>
<protein>
    <recommendedName>
        <fullName evidence="7">Transcriptional regulatory protein VxrB</fullName>
    </recommendedName>
    <alternativeName>
        <fullName evidence="6">Vibrio type six secretion regulator B</fullName>
    </alternativeName>
</protein>
<keyword id="KW-0010">Activator</keyword>
<keyword id="KW-0963">Cytoplasm</keyword>
<keyword id="KW-0238">DNA-binding</keyword>
<keyword id="KW-0597">Phosphoprotein</keyword>
<keyword id="KW-1185">Reference proteome</keyword>
<keyword id="KW-0804">Transcription</keyword>
<keyword id="KW-0805">Transcription regulation</keyword>
<keyword id="KW-0902">Two-component regulatory system</keyword>